<sequence length="824" mass="91663">MTVLQEPVQAAIWQALNHYAYRDAVFLAERLYAEVHSEEALFLLATCYYRSGKAYKAYRLLKGHSCTTPQCKYLLAKCCVDLSKLAEGEQILSGGVFNKQKSHDDLVTEFGDSACFTLSLLGHVYCKTDRLAKGSECYQKSLSLNPFLWSPFESLCEIGEKPDPDQTFKLTSLQNFSSCLPNTCTALVSNHSLSHRQPETVLTETPQDTIELNRLNLESSNSKYSLNTDSSVSYIDSAVISPDNVPLGTGPSILSKQVQNKPKTGRSLLGGPTALSPLTPSFGILPLETPSPGDGSYLQNYTNTPSVIDVPSTGAPTKKSVARMGHTGAKSVFSQSGNSREATPVLVAQTQSSGPQTSTTPQVLSPTITSPPNALPRRSSRLFTSDSSTTKENSKKLKMKFPPKIPNRKTKSKTNKGGITQPNINDSLEITKLDSSIISEGKISTITPQIQAFNLQKAAAGLMSLLREMGKGYLALCSYNCKEAINILSHLPSHHYSTGWVLCQIGRAYFELSEYMQAERIFSEVRRIESFRVEGMEIYSTTLWHLQKDVALSVLSKDLTDMDKNSPEAWCAAGNCFSLQREHDIAIKFFQRAIQVDPNYAYAYTLLGHEFVLTEELDKALACFRNAIRVNPRHYNAWYGLGMIYYKQEKFSLAEMHFQKALDINPQSSVLLCHIGVVQHALKKSEKALDTLNKAIVIDPKNPLCKFHRASVLFANEKYKSALQELEELKQIVPKESLVYFLIGKVYKKLGQTHLALMNFSWAMDLDPKGANNQIKEAIDKRYLPDDEEPITQEEQIMGTDESQESSMTDADDTQLHAAESDEF</sequence>
<comment type="function">
    <text evidence="2">Component of the anaphase promoting complex/cyclosome (APC/C), a cell cycle-regulated E3 ubiquitin ligase that controls progression through mitosis and the G1 phase of the cell cycle. The APC/C complex acts by mediating ubiquitination and subsequent degradation of target proteins: it mainly mediates the formation of 'Lys-11'-linked polyubiquitin chains and, to a lower extent, the formation of 'Lys-48'- and 'Lys-63'-linked polyubiquitin chains. The APC/C complex catalyzes assembly of branched 'Lys-11'-/'Lys-48'-linked branched ubiquitin chains on target proteins.</text>
</comment>
<comment type="pathway">
    <text evidence="2">Protein modification; protein ubiquitination.</text>
</comment>
<comment type="subunit">
    <text evidence="1 2">Homodimer. The mammalian APC/C is composed at least of 14 distinct subunits ANAPC1, ANAPC2, CDC27/APC3, ANAPC4, ANAPC5, CDC16/APC6, ANAPC7, CDC23/APC8, ANAPC10, ANAPC11, CDC26/APC12, ANAPC13, ANAPC15 and ANAPC16 that assemble into a complex of at least 19 chains with a combined molecular mass of around 1.2 MDa; APC/C interacts with FZR1 and FBXO5 (By similarity). Interacts with RB. Interacts with FAM168B/MANI (By similarity). Interacts with MCPH1 (By similarity).</text>
</comment>
<comment type="subcellular location">
    <subcellularLocation>
        <location evidence="2">Nucleus</location>
    </subcellularLocation>
    <subcellularLocation>
        <location evidence="2">Cytoplasm</location>
        <location evidence="2">Cytoskeleton</location>
        <location evidence="2">Spindle</location>
    </subcellularLocation>
</comment>
<comment type="PTM">
    <text evidence="2">Phosphorylated. Phosphorylation on Ser-427 and Thr-447 occurs specifically during mitosis (By similarity).</text>
</comment>
<comment type="similarity">
    <text evidence="4">Belongs to the APC3/CDC27 family.</text>
</comment>
<organism>
    <name type="scientific">Rattus norvegicus</name>
    <name type="common">Rat</name>
    <dbReference type="NCBI Taxonomy" id="10116"/>
    <lineage>
        <taxon>Eukaryota</taxon>
        <taxon>Metazoa</taxon>
        <taxon>Chordata</taxon>
        <taxon>Craniata</taxon>
        <taxon>Vertebrata</taxon>
        <taxon>Euteleostomi</taxon>
        <taxon>Mammalia</taxon>
        <taxon>Eutheria</taxon>
        <taxon>Euarchontoglires</taxon>
        <taxon>Glires</taxon>
        <taxon>Rodentia</taxon>
        <taxon>Myomorpha</taxon>
        <taxon>Muroidea</taxon>
        <taxon>Muridae</taxon>
        <taxon>Murinae</taxon>
        <taxon>Rattus</taxon>
    </lineage>
</organism>
<gene>
    <name type="primary">Cdc27</name>
</gene>
<protein>
    <recommendedName>
        <fullName>Cell division cycle protein 27 homolog</fullName>
    </recommendedName>
</protein>
<feature type="chain" id="PRO_0000390474" description="Cell division cycle protein 27 homolog">
    <location>
        <begin position="1"/>
        <end position="824"/>
    </location>
</feature>
<feature type="repeat" description="TPR 1">
    <location>
        <begin position="84"/>
        <end position="114"/>
    </location>
</feature>
<feature type="repeat" description="TPR 2">
    <location>
        <begin position="115"/>
        <end position="148"/>
    </location>
</feature>
<feature type="repeat" description="TPR 3">
    <location>
        <begin position="499"/>
        <end position="532"/>
    </location>
</feature>
<feature type="repeat" description="TPR 4">
    <location>
        <begin position="567"/>
        <end position="600"/>
    </location>
</feature>
<feature type="repeat" description="TPR 5">
    <location>
        <begin position="602"/>
        <end position="634"/>
    </location>
</feature>
<feature type="repeat" description="TPR 6">
    <location>
        <begin position="635"/>
        <end position="668"/>
    </location>
</feature>
<feature type="repeat" description="TPR 7">
    <location>
        <begin position="670"/>
        <end position="702"/>
    </location>
</feature>
<feature type="repeat" description="TPR 8">
    <location>
        <begin position="704"/>
        <end position="736"/>
    </location>
</feature>
<feature type="repeat" description="TPR 9">
    <location>
        <begin position="737"/>
        <end position="770"/>
    </location>
</feature>
<feature type="region of interest" description="Disordered" evidence="3">
    <location>
        <begin position="251"/>
        <end position="273"/>
    </location>
</feature>
<feature type="region of interest" description="Disordered" evidence="3">
    <location>
        <begin position="285"/>
        <end position="325"/>
    </location>
</feature>
<feature type="region of interest" description="Disordered" evidence="3">
    <location>
        <begin position="346"/>
        <end position="423"/>
    </location>
</feature>
<feature type="region of interest" description="Disordered" evidence="3">
    <location>
        <begin position="781"/>
        <end position="824"/>
    </location>
</feature>
<feature type="compositionally biased region" description="Polar residues" evidence="3">
    <location>
        <begin position="252"/>
        <end position="262"/>
    </location>
</feature>
<feature type="compositionally biased region" description="Polar residues" evidence="3">
    <location>
        <begin position="297"/>
        <end position="306"/>
    </location>
</feature>
<feature type="compositionally biased region" description="Low complexity" evidence="3">
    <location>
        <begin position="349"/>
        <end position="362"/>
    </location>
</feature>
<feature type="compositionally biased region" description="Polar residues" evidence="3">
    <location>
        <begin position="363"/>
        <end position="372"/>
    </location>
</feature>
<feature type="compositionally biased region" description="Polar residues" evidence="3">
    <location>
        <begin position="381"/>
        <end position="391"/>
    </location>
</feature>
<feature type="compositionally biased region" description="Basic residues" evidence="3">
    <location>
        <begin position="396"/>
        <end position="414"/>
    </location>
</feature>
<feature type="modified residue" description="Phosphothreonine" evidence="2">
    <location>
        <position position="205"/>
    </location>
</feature>
<feature type="modified residue" description="Phosphothreonine" evidence="2">
    <location>
        <position position="209"/>
    </location>
</feature>
<feature type="modified residue" description="Phosphoserine" evidence="2">
    <location>
        <position position="291"/>
    </location>
</feature>
<feature type="modified residue" description="Phosphothreonine" evidence="2">
    <location>
        <position position="313"/>
    </location>
</feature>
<feature type="modified residue" description="Phosphoserine" evidence="2">
    <location>
        <position position="339"/>
    </location>
</feature>
<feature type="modified residue" description="Phosphothreonine" evidence="2">
    <location>
        <position position="367"/>
    </location>
</feature>
<feature type="modified residue" description="Phosphoserine" evidence="2">
    <location>
        <position position="380"/>
    </location>
</feature>
<feature type="modified residue" description="Phosphoserine" evidence="2">
    <location>
        <position position="387"/>
    </location>
</feature>
<feature type="modified residue" description="Phosphoserine" evidence="2">
    <location>
        <position position="427"/>
    </location>
</feature>
<feature type="modified residue" description="Phosphothreonine" evidence="2">
    <location>
        <position position="431"/>
    </location>
</feature>
<feature type="modified residue" description="Phosphoserine" evidence="2">
    <location>
        <position position="436"/>
    </location>
</feature>
<feature type="modified residue" description="Phosphoserine" evidence="2">
    <location>
        <position position="439"/>
    </location>
</feature>
<feature type="modified residue" description="Phosphothreonine" evidence="2">
    <location>
        <position position="447"/>
    </location>
</feature>
<feature type="modified residue" description="Phosphoserine" evidence="2">
    <location>
        <position position="821"/>
    </location>
</feature>
<keyword id="KW-0963">Cytoplasm</keyword>
<keyword id="KW-0206">Cytoskeleton</keyword>
<keyword id="KW-0539">Nucleus</keyword>
<keyword id="KW-0597">Phosphoprotein</keyword>
<keyword id="KW-1185">Reference proteome</keyword>
<keyword id="KW-0677">Repeat</keyword>
<keyword id="KW-0802">TPR repeat</keyword>
<keyword id="KW-0833">Ubl conjugation pathway</keyword>
<name>CDC27_RAT</name>
<evidence type="ECO:0000250" key="1">
    <source>
        <dbReference type="UniProtKB" id="A2A6Q5"/>
    </source>
</evidence>
<evidence type="ECO:0000250" key="2">
    <source>
        <dbReference type="UniProtKB" id="P30260"/>
    </source>
</evidence>
<evidence type="ECO:0000256" key="3">
    <source>
        <dbReference type="SAM" id="MobiDB-lite"/>
    </source>
</evidence>
<evidence type="ECO:0000305" key="4"/>
<reference key="1">
    <citation type="journal article" date="2004" name="Genome Res.">
        <title>The status, quality, and expansion of the NIH full-length cDNA project: the Mammalian Gene Collection (MGC).</title>
        <authorList>
            <consortium name="The MGC Project Team"/>
        </authorList>
    </citation>
    <scope>NUCLEOTIDE SEQUENCE [LARGE SCALE MRNA]</scope>
    <source>
        <tissue>Testis</tissue>
    </source>
</reference>
<proteinExistence type="evidence at transcript level"/>
<dbReference type="EMBL" id="BC097475">
    <property type="protein sequence ID" value="AAH97475.1"/>
    <property type="molecule type" value="mRNA"/>
</dbReference>
<dbReference type="RefSeq" id="NP_001019964.1">
    <property type="nucleotide sequence ID" value="NM_001024793.2"/>
</dbReference>
<dbReference type="SMR" id="Q4V8A2"/>
<dbReference type="BioGRID" id="262095">
    <property type="interactions" value="6"/>
</dbReference>
<dbReference type="FunCoup" id="Q4V8A2">
    <property type="interactions" value="5354"/>
</dbReference>
<dbReference type="IntAct" id="Q4V8A2">
    <property type="interactions" value="1"/>
</dbReference>
<dbReference type="MINT" id="Q4V8A2"/>
<dbReference type="STRING" id="10116.ENSRNOP00000007963"/>
<dbReference type="iPTMnet" id="Q4V8A2"/>
<dbReference type="PhosphoSitePlus" id="Q4V8A2"/>
<dbReference type="PaxDb" id="10116-ENSRNOP00000007963"/>
<dbReference type="GeneID" id="360643"/>
<dbReference type="KEGG" id="rno:360643"/>
<dbReference type="UCSC" id="RGD:1304921">
    <property type="organism name" value="rat"/>
</dbReference>
<dbReference type="AGR" id="RGD:1304921"/>
<dbReference type="CTD" id="996"/>
<dbReference type="RGD" id="1304921">
    <property type="gene designation" value="Cdc27"/>
</dbReference>
<dbReference type="VEuPathDB" id="HostDB:ENSRNOG00000005904"/>
<dbReference type="eggNOG" id="KOG1126">
    <property type="taxonomic scope" value="Eukaryota"/>
</dbReference>
<dbReference type="HOGENOM" id="CLU_008850_1_0_1"/>
<dbReference type="InParanoid" id="Q4V8A2"/>
<dbReference type="OrthoDB" id="329563at2759"/>
<dbReference type="Reactome" id="R-RNO-141430">
    <property type="pathway name" value="Inactivation of APC/C via direct inhibition of the APC/C complex"/>
</dbReference>
<dbReference type="Reactome" id="R-RNO-174048">
    <property type="pathway name" value="APC/C:Cdc20 mediated degradation of Cyclin B"/>
</dbReference>
<dbReference type="Reactome" id="R-RNO-174084">
    <property type="pathway name" value="Autodegradation of Cdh1 by Cdh1:APC/C"/>
</dbReference>
<dbReference type="Reactome" id="R-RNO-174154">
    <property type="pathway name" value="APC/C:Cdc20 mediated degradation of Securin"/>
</dbReference>
<dbReference type="Reactome" id="R-RNO-174178">
    <property type="pathway name" value="APC/C:Cdh1 mediated degradation of Cdc20 and other APC/C:Cdh1 targeted proteins in late mitosis/early G1"/>
</dbReference>
<dbReference type="Reactome" id="R-RNO-174184">
    <property type="pathway name" value="Cdc20:Phospho-APC/C mediated degradation of Cyclin A"/>
</dbReference>
<dbReference type="Reactome" id="R-RNO-176407">
    <property type="pathway name" value="Conversion from APC/C:Cdc20 to APC/C:Cdh1 in late anaphase"/>
</dbReference>
<dbReference type="Reactome" id="R-RNO-176408">
    <property type="pathway name" value="Regulation of APC/C activators between G1/S and early anaphase"/>
</dbReference>
<dbReference type="Reactome" id="R-RNO-176412">
    <property type="pathway name" value="Phosphorylation of the APC/C"/>
</dbReference>
<dbReference type="Reactome" id="R-RNO-179409">
    <property type="pathway name" value="APC-Cdc20 mediated degradation of Nek2A"/>
</dbReference>
<dbReference type="Reactome" id="R-RNO-2467813">
    <property type="pathway name" value="Separation of Sister Chromatids"/>
</dbReference>
<dbReference type="Reactome" id="R-RNO-2559582">
    <property type="pathway name" value="Senescence-Associated Secretory Phenotype (SASP)"/>
</dbReference>
<dbReference type="Reactome" id="R-RNO-68867">
    <property type="pathway name" value="Assembly of the pre-replicative complex"/>
</dbReference>
<dbReference type="Reactome" id="R-RNO-69017">
    <property type="pathway name" value="CDK-mediated phosphorylation and removal of Cdc6"/>
</dbReference>
<dbReference type="Reactome" id="R-RNO-983168">
    <property type="pathway name" value="Antigen processing: Ubiquitination &amp; Proteasome degradation"/>
</dbReference>
<dbReference type="UniPathway" id="UPA00143"/>
<dbReference type="PRO" id="PR:Q4V8A2"/>
<dbReference type="Proteomes" id="UP000002494">
    <property type="component" value="Chromosome 10"/>
</dbReference>
<dbReference type="Bgee" id="ENSRNOG00000005904">
    <property type="expression patterns" value="Expressed in testis and 19 other cell types or tissues"/>
</dbReference>
<dbReference type="GO" id="GO:0005680">
    <property type="term" value="C:anaphase-promoting complex"/>
    <property type="evidence" value="ECO:0000250"/>
    <property type="project" value="UniProtKB"/>
</dbReference>
<dbReference type="GO" id="GO:0005813">
    <property type="term" value="C:centrosome"/>
    <property type="evidence" value="ECO:0000266"/>
    <property type="project" value="RGD"/>
</dbReference>
<dbReference type="GO" id="GO:0005737">
    <property type="term" value="C:cytoplasm"/>
    <property type="evidence" value="ECO:0000318"/>
    <property type="project" value="GO_Central"/>
</dbReference>
<dbReference type="GO" id="GO:0072686">
    <property type="term" value="C:mitotic spindle"/>
    <property type="evidence" value="ECO:0000266"/>
    <property type="project" value="RGD"/>
</dbReference>
<dbReference type="GO" id="GO:0005634">
    <property type="term" value="C:nucleus"/>
    <property type="evidence" value="ECO:0000250"/>
    <property type="project" value="UniProtKB"/>
</dbReference>
<dbReference type="GO" id="GO:0005819">
    <property type="term" value="C:spindle"/>
    <property type="evidence" value="ECO:0000250"/>
    <property type="project" value="UniProtKB"/>
</dbReference>
<dbReference type="GO" id="GO:0019903">
    <property type="term" value="F:protein phosphatase binding"/>
    <property type="evidence" value="ECO:0000266"/>
    <property type="project" value="RGD"/>
</dbReference>
<dbReference type="GO" id="GO:0031145">
    <property type="term" value="P:anaphase-promoting complex-dependent catabolic process"/>
    <property type="evidence" value="ECO:0000250"/>
    <property type="project" value="UniProtKB"/>
</dbReference>
<dbReference type="GO" id="GO:0051301">
    <property type="term" value="P:cell division"/>
    <property type="evidence" value="ECO:0000318"/>
    <property type="project" value="GO_Central"/>
</dbReference>
<dbReference type="GO" id="GO:0007091">
    <property type="term" value="P:metaphase/anaphase transition of mitotic cell cycle"/>
    <property type="evidence" value="ECO:0000266"/>
    <property type="project" value="RGD"/>
</dbReference>
<dbReference type="GO" id="GO:0031175">
    <property type="term" value="P:neuron projection development"/>
    <property type="evidence" value="ECO:0000266"/>
    <property type="project" value="RGD"/>
</dbReference>
<dbReference type="GO" id="GO:0141198">
    <property type="term" value="P:protein branched polyubiquitination"/>
    <property type="evidence" value="ECO:0000250"/>
    <property type="project" value="UniProtKB"/>
</dbReference>
<dbReference type="GO" id="GO:0070979">
    <property type="term" value="P:protein K11-linked ubiquitination"/>
    <property type="evidence" value="ECO:0000250"/>
    <property type="project" value="UniProtKB"/>
</dbReference>
<dbReference type="GO" id="GO:0070936">
    <property type="term" value="P:protein K48-linked ubiquitination"/>
    <property type="evidence" value="ECO:0000250"/>
    <property type="project" value="UniProtKB"/>
</dbReference>
<dbReference type="GO" id="GO:0016567">
    <property type="term" value="P:protein ubiquitination"/>
    <property type="evidence" value="ECO:0000318"/>
    <property type="project" value="GO_Central"/>
</dbReference>
<dbReference type="FunFam" id="1.25.40.10:FF:000085">
    <property type="entry name" value="Cell division cycle 27 homolog (S. cerevisiae)"/>
    <property type="match status" value="1"/>
</dbReference>
<dbReference type="FunFam" id="1.25.40.10:FF:000018">
    <property type="entry name" value="Cell division cycle protein 27 homolog B"/>
    <property type="match status" value="1"/>
</dbReference>
<dbReference type="FunFam" id="1.25.40.10:FF:000051">
    <property type="entry name" value="Cell division cycle protein 27 isoform X3"/>
    <property type="match status" value="1"/>
</dbReference>
<dbReference type="Gene3D" id="1.25.40.10">
    <property type="entry name" value="Tetratricopeptide repeat domain"/>
    <property type="match status" value="4"/>
</dbReference>
<dbReference type="InterPro" id="IPR011990">
    <property type="entry name" value="TPR-like_helical_dom_sf"/>
</dbReference>
<dbReference type="InterPro" id="IPR019734">
    <property type="entry name" value="TPR_rpt"/>
</dbReference>
<dbReference type="PANTHER" id="PTHR12558">
    <property type="entry name" value="CELL DIVISION CYCLE 16,23,27"/>
    <property type="match status" value="1"/>
</dbReference>
<dbReference type="PANTHER" id="PTHR12558:SF13">
    <property type="entry name" value="CELL DIVISION CYCLE PROTEIN 27 HOMOLOG"/>
    <property type="match status" value="1"/>
</dbReference>
<dbReference type="Pfam" id="PF12895">
    <property type="entry name" value="ANAPC3"/>
    <property type="match status" value="1"/>
</dbReference>
<dbReference type="Pfam" id="PF00515">
    <property type="entry name" value="TPR_1"/>
    <property type="match status" value="2"/>
</dbReference>
<dbReference type="Pfam" id="PF13181">
    <property type="entry name" value="TPR_8"/>
    <property type="match status" value="2"/>
</dbReference>
<dbReference type="SMART" id="SM00028">
    <property type="entry name" value="TPR"/>
    <property type="match status" value="8"/>
</dbReference>
<dbReference type="SUPFAM" id="SSF48452">
    <property type="entry name" value="TPR-like"/>
    <property type="match status" value="2"/>
</dbReference>
<dbReference type="PROSITE" id="PS50005">
    <property type="entry name" value="TPR"/>
    <property type="match status" value="8"/>
</dbReference>
<dbReference type="PROSITE" id="PS50293">
    <property type="entry name" value="TPR_REGION"/>
    <property type="match status" value="2"/>
</dbReference>
<accession>Q4V8A2</accession>